<gene>
    <name type="primary">MYO2</name>
</gene>
<protein>
    <recommendedName>
        <fullName>Myosin-2</fullName>
    </recommendedName>
    <alternativeName>
        <fullName>Class V unconventional myosin MYO2</fullName>
    </alternativeName>
    <alternativeName>
        <fullName>Type V myosin heavy chain MYO2</fullName>
        <shortName>Myosin V MYO2</shortName>
    </alternativeName>
</protein>
<accession>Q875Q8</accession>
<name>MYO2_LACK1</name>
<evidence type="ECO:0000250" key="1"/>
<evidence type="ECO:0000255" key="2"/>
<evidence type="ECO:0000255" key="3">
    <source>
        <dbReference type="PROSITE-ProRule" id="PRU00116"/>
    </source>
</evidence>
<evidence type="ECO:0000255" key="4">
    <source>
        <dbReference type="PROSITE-ProRule" id="PRU00503"/>
    </source>
</evidence>
<evidence type="ECO:0000255" key="5">
    <source>
        <dbReference type="PROSITE-ProRule" id="PRU00782"/>
    </source>
</evidence>
<evidence type="ECO:0000255" key="6">
    <source>
        <dbReference type="PROSITE-ProRule" id="PRU01190"/>
    </source>
</evidence>
<evidence type="ECO:0000256" key="7">
    <source>
        <dbReference type="SAM" id="MobiDB-lite"/>
    </source>
</evidence>
<evidence type="ECO:0000305" key="8"/>
<proteinExistence type="inferred from homology"/>
<sequence length="1554" mass="178198">MSYEVGTRCWYPDKQQGWIGGEITKHTNLSNKHQLELTLEDNQIVEIESETLDETKDDRLPLLRNPPILEATEDLTSLSYLNEPAVLHAIKARYAQLNIYTYSGIVLIATNPFDRVEQLYSQDMIQAYAGKRRGELEPHLFAIAEEAYRLMKNDKQNQTIVVSGESGAGKTVSAKYIMRYFASVEQNNEENAHHNLEMSETEKKILATNPIMEAFGNAKTTRNDNSSRFGKYLEILFDKEISIIGARIRTYLLERSRLVFQPKSERNYHIFYQLLAGLTNEEKSQLKLTGVEDYHYMNQGGEAQIKGIDDAEEYQTTVEALSLVGISKDTQYQLFKILAALLHIGNVEIKKTRNDASLSSDEPNLAIACELLGIDSFNFAKWITKKQINTRSEKIVSNLNYNQALVARDSVAKFIYSALFEWLVDNINTVLCNPEVASEINSFIGVLDIYGFEHFEKNSFEQFCINYANEKLQQEFNQHVFKLEQEEYVKEEIEWSFIEFNDNQPCIDLIENKLGILSLLDEESRLPAGSDETWTQKLYQTLDKPPTNTVFSKPRFGQTKFVVSHYALDVSYDVEGFIEKNRDTVSDGHLEVLKASTNETLLSILETLDKHAAKLAEKEQVNKKPGPARMVNRKPTLGSIFKQSLIELMGTINSTNVHYIRCIKPNEVKEAWVFDNLMVLSQLRACGVLETIRISCAGFPSRWTYNEFVLRYHILIPSEHWSKMFSSDTTEEDIRDLCRTILGAIVEDKQKYQLGNTKIFFKAGMLAYLEKLRSDRLHNSSVLIQKKVKAVYYRKKYLAIISSIRNFHSRSEGFLTRQRVDLEFKTQAAILIQSMVRSTSTRNKTISLLSAITRLQSLVRKQLAQKELLQRRQRDAAVSIQKKIRAFEPRQSFNTTRRSTVVVQSLVRKKFAQKKLKDLKTEAKSVNHLKEVSYKLENKVIQLTESLAEKVKENKGMTARIQELQQSLNESANIKELLNSQKDEHSKVLQQQKDAHDVQFNEVQEKLVNAKKEVEEAKEEIEQLIAKQDELKAEVRTKIEELNKAKKTFTEFQTQNSDLKNEVKSLKDEIARLQAAVRSGVTSSTITSTPTASRRFSAHSSVADGTSPRQLNVISMNNGGIEDDARSTASALSQINDELYKLLEDTKSLNTEIVEGLLKGFKIPETGVAVELTRKEVLYPARILIIVLSDMWRLGLTKQSESFLAEVLSTIQKLVTNLKGDDMILHGAFWLTNVRELYSFVVFAQESILNDDSYNNGLNEDEYKEYVTLVTELKDDFESLSYNIYNIWLKKLQKDLERKAISAVVMSQSLPGFIAPESSPFLPKLFSQSSHYKMDDILTFFNNIYWSMKTYHVETEVFREVIMTLLKYVDAICFNDLIMRRNFLSWKRGLQLNYNVTRLEEWCKSHQLPEGTECLQHMLQASKLLQLKKANLEDINIIWEICSSLKPAQIQKLISQYAVADYEVPIPQEILNFVADRVKKESSLSSDGKSQTHSSDIFLSVDSGPFEDPFGQIETREFGKIEAYIPAWLNLPITRRVVELVTQHVTVQESQRTE</sequence>
<feature type="chain" id="PRO_0000123488" description="Myosin-2">
    <location>
        <begin position="1"/>
        <end position="1554"/>
    </location>
</feature>
<feature type="domain" description="Myosin N-terminal SH3-like" evidence="6">
    <location>
        <begin position="4"/>
        <end position="57"/>
    </location>
</feature>
<feature type="domain" description="Myosin motor" evidence="5">
    <location>
        <begin position="70"/>
        <end position="774"/>
    </location>
</feature>
<feature type="domain" description="IQ 1" evidence="3">
    <location>
        <begin position="778"/>
        <end position="798"/>
    </location>
</feature>
<feature type="domain" description="IQ 2" evidence="3">
    <location>
        <begin position="800"/>
        <end position="824"/>
    </location>
</feature>
<feature type="domain" description="IQ 3" evidence="3">
    <location>
        <begin position="825"/>
        <end position="847"/>
    </location>
</feature>
<feature type="domain" description="IQ 4" evidence="3">
    <location>
        <begin position="848"/>
        <end position="872"/>
    </location>
</feature>
<feature type="domain" description="IQ 5" evidence="3">
    <location>
        <begin position="873"/>
        <end position="895"/>
    </location>
</feature>
<feature type="domain" description="IQ 6" evidence="3">
    <location>
        <begin position="896"/>
        <end position="925"/>
    </location>
</feature>
<feature type="domain" description="Dilute" evidence="4">
    <location>
        <begin position="1205"/>
        <end position="1480"/>
    </location>
</feature>
<feature type="region of interest" description="Actin-binding" evidence="1">
    <location>
        <begin position="443"/>
        <end position="523"/>
    </location>
</feature>
<feature type="region of interest" description="Non alpha-helical, tail domain">
    <location>
        <begin position="1080"/>
        <end position="1554"/>
    </location>
</feature>
<feature type="region of interest" description="Disordered" evidence="7">
    <location>
        <begin position="1082"/>
        <end position="1109"/>
    </location>
</feature>
<feature type="coiled-coil region" evidence="2">
    <location>
        <begin position="926"/>
        <end position="1079"/>
    </location>
</feature>
<feature type="compositionally biased region" description="Low complexity" evidence="7">
    <location>
        <begin position="1082"/>
        <end position="1093"/>
    </location>
</feature>
<feature type="compositionally biased region" description="Polar residues" evidence="7">
    <location>
        <begin position="1098"/>
        <end position="1109"/>
    </location>
</feature>
<feature type="binding site" evidence="2">
    <location>
        <begin position="164"/>
        <end position="171"/>
    </location>
    <ligand>
        <name>ATP</name>
        <dbReference type="ChEBI" id="CHEBI:30616"/>
    </ligand>
</feature>
<comment type="function">
    <text evidence="1">Myosin heavy chain that is required for the cell cycle-regulated transport of various organelles and proteins for their segregation. Functions by binding with its tail domain to receptor proteins on organelles and exerting force with its N-terminal motor domain against actin filaments, thereby transporting its cargo along polarized actin cables (By similarity).</text>
</comment>
<comment type="subunit">
    <text evidence="1">Homodimer. Interacts with calmodulin (CMD1) and the myosin light chain MLC1 through its IQ repeats (By similarity).</text>
</comment>
<comment type="similarity">
    <text evidence="8">Belongs to the TRAFAC class myosin-kinesin ATPase superfamily. Myosin family.</text>
</comment>
<dbReference type="EMBL" id="AY145011">
    <property type="protein sequence ID" value="AAO32574.1"/>
    <property type="molecule type" value="Genomic_DNA"/>
</dbReference>
<dbReference type="SMR" id="Q875Q8"/>
<dbReference type="GO" id="GO:0005737">
    <property type="term" value="C:cytoplasm"/>
    <property type="evidence" value="ECO:0007669"/>
    <property type="project" value="TreeGrafter"/>
</dbReference>
<dbReference type="GO" id="GO:0016020">
    <property type="term" value="C:membrane"/>
    <property type="evidence" value="ECO:0007669"/>
    <property type="project" value="TreeGrafter"/>
</dbReference>
<dbReference type="GO" id="GO:0016459">
    <property type="term" value="C:myosin complex"/>
    <property type="evidence" value="ECO:0007669"/>
    <property type="project" value="UniProtKB-KW"/>
</dbReference>
<dbReference type="GO" id="GO:0051015">
    <property type="term" value="F:actin filament binding"/>
    <property type="evidence" value="ECO:0007669"/>
    <property type="project" value="TreeGrafter"/>
</dbReference>
<dbReference type="GO" id="GO:0005524">
    <property type="term" value="F:ATP binding"/>
    <property type="evidence" value="ECO:0007669"/>
    <property type="project" value="UniProtKB-KW"/>
</dbReference>
<dbReference type="GO" id="GO:0000146">
    <property type="term" value="F:microfilament motor activity"/>
    <property type="evidence" value="ECO:0007669"/>
    <property type="project" value="TreeGrafter"/>
</dbReference>
<dbReference type="GO" id="GO:0007015">
    <property type="term" value="P:actin filament organization"/>
    <property type="evidence" value="ECO:0007669"/>
    <property type="project" value="TreeGrafter"/>
</dbReference>
<dbReference type="GO" id="GO:0015031">
    <property type="term" value="P:protein transport"/>
    <property type="evidence" value="ECO:0007669"/>
    <property type="project" value="UniProtKB-KW"/>
</dbReference>
<dbReference type="CDD" id="cd15480">
    <property type="entry name" value="fMyo2p_CBD"/>
    <property type="match status" value="1"/>
</dbReference>
<dbReference type="CDD" id="cd01380">
    <property type="entry name" value="MYSc_Myo5"/>
    <property type="match status" value="1"/>
</dbReference>
<dbReference type="FunFam" id="1.20.58.530:FF:000002">
    <property type="entry name" value="Class V myosin"/>
    <property type="match status" value="1"/>
</dbReference>
<dbReference type="FunFam" id="1.10.10.820:FF:000001">
    <property type="entry name" value="Myosin heavy chain"/>
    <property type="match status" value="1"/>
</dbReference>
<dbReference type="Gene3D" id="1.10.10.820">
    <property type="match status" value="1"/>
</dbReference>
<dbReference type="Gene3D" id="1.20.5.190">
    <property type="match status" value="2"/>
</dbReference>
<dbReference type="Gene3D" id="1.20.5.4820">
    <property type="match status" value="1"/>
</dbReference>
<dbReference type="Gene3D" id="1.20.58.530">
    <property type="match status" value="1"/>
</dbReference>
<dbReference type="Gene3D" id="3.40.850.10">
    <property type="entry name" value="Kinesin motor domain"/>
    <property type="match status" value="1"/>
</dbReference>
<dbReference type="Gene3D" id="1.20.120.720">
    <property type="entry name" value="Myosin VI head, motor domain, U50 subdomain"/>
    <property type="match status" value="1"/>
</dbReference>
<dbReference type="InterPro" id="IPR002710">
    <property type="entry name" value="Dilute_dom"/>
</dbReference>
<dbReference type="InterPro" id="IPR046943">
    <property type="entry name" value="Fungal_Myo2/2A_CBD"/>
</dbReference>
<dbReference type="InterPro" id="IPR036961">
    <property type="entry name" value="Kinesin_motor_dom_sf"/>
</dbReference>
<dbReference type="InterPro" id="IPR001609">
    <property type="entry name" value="Myosin_head_motor_dom-like"/>
</dbReference>
<dbReference type="InterPro" id="IPR004009">
    <property type="entry name" value="Myosin_N"/>
</dbReference>
<dbReference type="InterPro" id="IPR036103">
    <property type="entry name" value="MYSc_Myo5"/>
</dbReference>
<dbReference type="InterPro" id="IPR027417">
    <property type="entry name" value="P-loop_NTPase"/>
</dbReference>
<dbReference type="PANTHER" id="PTHR13140:SF706">
    <property type="entry name" value="DILUTE CLASS UNCONVENTIONAL MYOSIN, ISOFORM C"/>
    <property type="match status" value="1"/>
</dbReference>
<dbReference type="PANTHER" id="PTHR13140">
    <property type="entry name" value="MYOSIN"/>
    <property type="match status" value="1"/>
</dbReference>
<dbReference type="Pfam" id="PF01843">
    <property type="entry name" value="DIL"/>
    <property type="match status" value="1"/>
</dbReference>
<dbReference type="Pfam" id="PF00063">
    <property type="entry name" value="Myosin_head"/>
    <property type="match status" value="1"/>
</dbReference>
<dbReference type="PRINTS" id="PR00193">
    <property type="entry name" value="MYOSINHEAVY"/>
</dbReference>
<dbReference type="SMART" id="SM01132">
    <property type="entry name" value="DIL"/>
    <property type="match status" value="1"/>
</dbReference>
<dbReference type="SMART" id="SM00242">
    <property type="entry name" value="MYSc"/>
    <property type="match status" value="1"/>
</dbReference>
<dbReference type="SUPFAM" id="SSF50084">
    <property type="entry name" value="Myosin S1 fragment, N-terminal domain"/>
    <property type="match status" value="1"/>
</dbReference>
<dbReference type="SUPFAM" id="SSF52540">
    <property type="entry name" value="P-loop containing nucleoside triphosphate hydrolases"/>
    <property type="match status" value="2"/>
</dbReference>
<dbReference type="PROSITE" id="PS51126">
    <property type="entry name" value="DILUTE"/>
    <property type="match status" value="1"/>
</dbReference>
<dbReference type="PROSITE" id="PS50096">
    <property type="entry name" value="IQ"/>
    <property type="match status" value="3"/>
</dbReference>
<dbReference type="PROSITE" id="PS51456">
    <property type="entry name" value="MYOSIN_MOTOR"/>
    <property type="match status" value="1"/>
</dbReference>
<dbReference type="PROSITE" id="PS51844">
    <property type="entry name" value="SH3_LIKE"/>
    <property type="match status" value="1"/>
</dbReference>
<organism>
    <name type="scientific">Lachancea kluyveri (strain ATCC 58438 / CBS 3082 / BCRC 21498 / NBRC 1685 / JCM 7257 / NCYC 543 / NRRL Y-12651)</name>
    <name type="common">Yeast</name>
    <name type="synonym">Saccharomyces kluyveri</name>
    <dbReference type="NCBI Taxonomy" id="226302"/>
    <lineage>
        <taxon>Eukaryota</taxon>
        <taxon>Fungi</taxon>
        <taxon>Dikarya</taxon>
        <taxon>Ascomycota</taxon>
        <taxon>Saccharomycotina</taxon>
        <taxon>Saccharomycetes</taxon>
        <taxon>Saccharomycetales</taxon>
        <taxon>Saccharomycetaceae</taxon>
        <taxon>Lachancea</taxon>
    </lineage>
</organism>
<keyword id="KW-0009">Actin-binding</keyword>
<keyword id="KW-0067">ATP-binding</keyword>
<keyword id="KW-0131">Cell cycle</keyword>
<keyword id="KW-0175">Coiled coil</keyword>
<keyword id="KW-0505">Motor protein</keyword>
<keyword id="KW-0518">Myosin</keyword>
<keyword id="KW-0547">Nucleotide-binding</keyword>
<keyword id="KW-0653">Protein transport</keyword>
<keyword id="KW-0677">Repeat</keyword>
<keyword id="KW-0813">Transport</keyword>
<reference key="1">
    <citation type="journal article" date="2003" name="Nature">
        <title>Yeast genome duplication was followed by asynchronous differentiation of duplicated genes.</title>
        <authorList>
            <person name="Langkjaer R.B."/>
            <person name="Cliften P.F."/>
            <person name="Johnston M."/>
            <person name="Piskur J."/>
        </authorList>
    </citation>
    <scope>NUCLEOTIDE SEQUENCE [GENOMIC DNA]</scope>
    <source>
        <strain>ATCC 58438 / CBS 3082 / BCRC 21498 / NBRC 1685 / JCM 7257 / NCYC 543 / NRRL Y-12651</strain>
    </source>
</reference>